<proteinExistence type="predicted"/>
<evidence type="ECO:0000255" key="1"/>
<evidence type="ECO:0000305" key="2"/>
<dbReference type="EMBL" id="AE000782">
    <property type="protein sequence ID" value="AAB89038.1"/>
    <property type="molecule type" value="Genomic_DNA"/>
</dbReference>
<dbReference type="PIR" id="F69526">
    <property type="entry name" value="F69526"/>
</dbReference>
<dbReference type="RefSeq" id="WP_010879703.1">
    <property type="nucleotide sequence ID" value="NC_000917.1"/>
</dbReference>
<dbReference type="PaxDb" id="224325-AF_2214"/>
<dbReference type="EnsemblBacteria" id="AAB89038">
    <property type="protein sequence ID" value="AAB89038"/>
    <property type="gene ID" value="AF_2214"/>
</dbReference>
<dbReference type="KEGG" id="afu:AF_2214"/>
<dbReference type="HOGENOM" id="CLU_1248223_0_0_2"/>
<dbReference type="Proteomes" id="UP000002199">
    <property type="component" value="Chromosome"/>
</dbReference>
<dbReference type="GO" id="GO:0005886">
    <property type="term" value="C:plasma membrane"/>
    <property type="evidence" value="ECO:0007669"/>
    <property type="project" value="UniProtKB-SubCell"/>
</dbReference>
<name>Y2214_ARCFU</name>
<sequence>MSQQIDPQQIDPELKSGQIKVLLEQYKILKNEIHLTSQKMTGNIRIGLIVLSLIGSYILHSLIKNEITKSVIDNTTDAVMYTISILLIIGLWTNVFSSLSAIARLGGYLIYLEKTINELIGKNLMIYESEFVPKFFTGSAILAYDLPNVLVFGCTSLFVISFLGYKVLVTINTPDFNLILRSFIILILVISTILFLVNLFTILRVNKVKDEIVTFCTKKIK</sequence>
<protein>
    <recommendedName>
        <fullName>Uncharacterized protein AF_2214</fullName>
    </recommendedName>
</protein>
<keyword id="KW-1003">Cell membrane</keyword>
<keyword id="KW-0472">Membrane</keyword>
<keyword id="KW-1185">Reference proteome</keyword>
<keyword id="KW-0812">Transmembrane</keyword>
<keyword id="KW-1133">Transmembrane helix</keyword>
<gene>
    <name type="ordered locus">AF_2214</name>
</gene>
<organism>
    <name type="scientific">Archaeoglobus fulgidus (strain ATCC 49558 / DSM 4304 / JCM 9628 / NBRC 100126 / VC-16)</name>
    <dbReference type="NCBI Taxonomy" id="224325"/>
    <lineage>
        <taxon>Archaea</taxon>
        <taxon>Methanobacteriati</taxon>
        <taxon>Methanobacteriota</taxon>
        <taxon>Archaeoglobi</taxon>
        <taxon>Archaeoglobales</taxon>
        <taxon>Archaeoglobaceae</taxon>
        <taxon>Archaeoglobus</taxon>
    </lineage>
</organism>
<accession>O28069</accession>
<reference key="1">
    <citation type="journal article" date="1997" name="Nature">
        <title>The complete genome sequence of the hyperthermophilic, sulphate-reducing archaeon Archaeoglobus fulgidus.</title>
        <authorList>
            <person name="Klenk H.-P."/>
            <person name="Clayton R.A."/>
            <person name="Tomb J.-F."/>
            <person name="White O."/>
            <person name="Nelson K.E."/>
            <person name="Ketchum K.A."/>
            <person name="Dodson R.J."/>
            <person name="Gwinn M.L."/>
            <person name="Hickey E.K."/>
            <person name="Peterson J.D."/>
            <person name="Richardson D.L."/>
            <person name="Kerlavage A.R."/>
            <person name="Graham D.E."/>
            <person name="Kyrpides N.C."/>
            <person name="Fleischmann R.D."/>
            <person name="Quackenbush J."/>
            <person name="Lee N.H."/>
            <person name="Sutton G.G."/>
            <person name="Gill S.R."/>
            <person name="Kirkness E.F."/>
            <person name="Dougherty B.A."/>
            <person name="McKenney K."/>
            <person name="Adams M.D."/>
            <person name="Loftus B.J."/>
            <person name="Peterson S.N."/>
            <person name="Reich C.I."/>
            <person name="McNeil L.K."/>
            <person name="Badger J.H."/>
            <person name="Glodek A."/>
            <person name="Zhou L."/>
            <person name="Overbeek R."/>
            <person name="Gocayne J.D."/>
            <person name="Weidman J.F."/>
            <person name="McDonald L.A."/>
            <person name="Utterback T.R."/>
            <person name="Cotton M.D."/>
            <person name="Spriggs T."/>
            <person name="Artiach P."/>
            <person name="Kaine B.P."/>
            <person name="Sykes S.M."/>
            <person name="Sadow P.W."/>
            <person name="D'Andrea K.P."/>
            <person name="Bowman C."/>
            <person name="Fujii C."/>
            <person name="Garland S.A."/>
            <person name="Mason T.M."/>
            <person name="Olsen G.J."/>
            <person name="Fraser C.M."/>
            <person name="Smith H.O."/>
            <person name="Woese C.R."/>
            <person name="Venter J.C."/>
        </authorList>
    </citation>
    <scope>NUCLEOTIDE SEQUENCE [LARGE SCALE GENOMIC DNA]</scope>
    <source>
        <strain>ATCC 49558 / DSM 4304 / JCM 9628 / NBRC 100126 / VC-16</strain>
    </source>
</reference>
<feature type="chain" id="PRO_0000128122" description="Uncharacterized protein AF_2214">
    <location>
        <begin position="1"/>
        <end position="221"/>
    </location>
</feature>
<feature type="transmembrane region" description="Helical" evidence="1">
    <location>
        <begin position="41"/>
        <end position="63"/>
    </location>
</feature>
<feature type="transmembrane region" description="Helical" evidence="1">
    <location>
        <begin position="78"/>
        <end position="100"/>
    </location>
</feature>
<feature type="transmembrane region" description="Helical" evidence="1">
    <location>
        <begin position="141"/>
        <end position="163"/>
    </location>
</feature>
<feature type="transmembrane region" description="Helical" evidence="1">
    <location>
        <begin position="178"/>
        <end position="200"/>
    </location>
</feature>
<comment type="subcellular location">
    <subcellularLocation>
        <location evidence="2">Cell membrane</location>
        <topology evidence="2">Multi-pass membrane protein</topology>
    </subcellularLocation>
</comment>